<keyword id="KW-0378">Hydrolase</keyword>
<keyword id="KW-0460">Magnesium</keyword>
<keyword id="KW-0464">Manganese</keyword>
<keyword id="KW-0479">Metal-binding</keyword>
<keyword id="KW-0520">NAD</keyword>
<keyword id="KW-1185">Reference proteome</keyword>
<keyword id="KW-0862">Zinc</keyword>
<gene>
    <name evidence="1" type="primary">nudC</name>
    <name type="ordered locus">PSPTO_2720</name>
</gene>
<evidence type="ECO:0000255" key="1">
    <source>
        <dbReference type="HAMAP-Rule" id="MF_00297"/>
    </source>
</evidence>
<feature type="chain" id="PRO_0000056974" description="NAD-capped RNA hydrolase NudC">
    <location>
        <begin position="1"/>
        <end position="278"/>
    </location>
</feature>
<feature type="domain" description="Nudix hydrolase" evidence="1">
    <location>
        <begin position="141"/>
        <end position="264"/>
    </location>
</feature>
<feature type="short sequence motif" description="Nudix box" evidence="1">
    <location>
        <begin position="175"/>
        <end position="196"/>
    </location>
</feature>
<feature type="binding site" evidence="1">
    <location>
        <position position="84"/>
    </location>
    <ligand>
        <name>substrate</name>
    </ligand>
</feature>
<feature type="binding site" evidence="1">
    <location>
        <position position="114"/>
    </location>
    <ligand>
        <name>Zn(2+)</name>
        <dbReference type="ChEBI" id="CHEBI:29105"/>
    </ligand>
</feature>
<feature type="binding site" evidence="1">
    <location>
        <position position="117"/>
    </location>
    <ligand>
        <name>Zn(2+)</name>
        <dbReference type="ChEBI" id="CHEBI:29105"/>
    </ligand>
</feature>
<feature type="binding site" evidence="1">
    <location>
        <position position="127"/>
    </location>
    <ligand>
        <name>substrate</name>
    </ligand>
</feature>
<feature type="binding site" evidence="1">
    <location>
        <position position="132"/>
    </location>
    <ligand>
        <name>Zn(2+)</name>
        <dbReference type="ChEBI" id="CHEBI:29105"/>
    </ligand>
</feature>
<feature type="binding site" evidence="1">
    <location>
        <position position="140"/>
    </location>
    <ligand>
        <name>substrate</name>
    </ligand>
</feature>
<feature type="binding site" evidence="1">
    <location>
        <position position="174"/>
    </location>
    <ligand>
        <name>a divalent metal cation</name>
        <dbReference type="ChEBI" id="CHEBI:60240"/>
        <label>1</label>
    </ligand>
</feature>
<feature type="binding site" evidence="1">
    <location>
        <position position="190"/>
    </location>
    <ligand>
        <name>a divalent metal cation</name>
        <dbReference type="ChEBI" id="CHEBI:60240"/>
        <label>2</label>
    </ligand>
</feature>
<feature type="binding site" evidence="1">
    <location>
        <position position="190"/>
    </location>
    <ligand>
        <name>a divalent metal cation</name>
        <dbReference type="ChEBI" id="CHEBI:60240"/>
        <label>3</label>
    </ligand>
</feature>
<feature type="binding site" evidence="1">
    <location>
        <position position="194"/>
    </location>
    <ligand>
        <name>a divalent metal cation</name>
        <dbReference type="ChEBI" id="CHEBI:60240"/>
        <label>1</label>
    </ligand>
</feature>
<feature type="binding site" evidence="1">
    <location>
        <position position="194"/>
    </location>
    <ligand>
        <name>a divalent metal cation</name>
        <dbReference type="ChEBI" id="CHEBI:60240"/>
        <label>3</label>
    </ligand>
</feature>
<feature type="binding site" evidence="1">
    <location>
        <begin position="208"/>
        <end position="215"/>
    </location>
    <ligand>
        <name>substrate</name>
    </ligand>
</feature>
<feature type="binding site" evidence="1">
    <location>
        <position position="235"/>
    </location>
    <ligand>
        <name>a divalent metal cation</name>
        <dbReference type="ChEBI" id="CHEBI:60240"/>
        <label>1</label>
    </ligand>
</feature>
<feature type="binding site" evidence="1">
    <location>
        <position position="235"/>
    </location>
    <ligand>
        <name>a divalent metal cation</name>
        <dbReference type="ChEBI" id="CHEBI:60240"/>
        <label>3</label>
    </ligand>
</feature>
<feature type="binding site" evidence="1">
    <location>
        <position position="257"/>
    </location>
    <ligand>
        <name>substrate</name>
    </ligand>
</feature>
<proteinExistence type="inferred from homology"/>
<protein>
    <recommendedName>
        <fullName evidence="1">NAD-capped RNA hydrolase NudC</fullName>
        <shortName evidence="1">DeNADding enzyme NudC</shortName>
        <ecNumber evidence="1">3.6.1.-</ecNumber>
    </recommendedName>
    <alternativeName>
        <fullName evidence="1">NADH pyrophosphatase</fullName>
        <ecNumber evidence="1">3.6.1.22</ecNumber>
    </alternativeName>
</protein>
<accession>Q882A9</accession>
<sequence>MTRPQRWTTAVLDVEADGGLAVVQGDQGFLLDSNGALFPRSWLRALDLPVQSEHGIGYFDGEPVYLLVLQHSVVVEGCAWQGLRQFMLEGDFAVFQMLGYAAQVATWAREHRFCGACGRATVQIAGERAMYCEHDNLRLYPRISPSMIVLVTRGDEVLLARSPRFVSGMYSALAGFVEPGESAEDCVHREVMEEVQVRIKNLKYMGSQCWPFPHSMMLGFHAQYAGGDIVPQVDEIEDARWFHIDDLPPLPANRSIARYLIEAYLAERSGAPEPVLPG</sequence>
<name>NUDC_PSESM</name>
<comment type="function">
    <text evidence="1">mRNA decapping enzyme that specifically removes the nicotinamide adenine dinucleotide (NAD) cap from a subset of mRNAs by hydrolyzing the diphosphate linkage to produce nicotinamide mononucleotide (NMN) and 5' monophosphate mRNA. The NAD-cap is present at the 5'-end of some mRNAs and stabilizes RNA against 5'-processing. Has preference for mRNAs with a 5'-end purine. Catalyzes the hydrolysis of a broad range of dinucleotide pyrophosphates.</text>
</comment>
<comment type="catalytic activity">
    <reaction evidence="1">
        <text>a 5'-end NAD(+)-phospho-ribonucleoside in mRNA + H2O = a 5'-end phospho-adenosine-phospho-ribonucleoside in mRNA + beta-nicotinamide D-ribonucleotide + 2 H(+)</text>
        <dbReference type="Rhea" id="RHEA:60876"/>
        <dbReference type="Rhea" id="RHEA-COMP:15698"/>
        <dbReference type="Rhea" id="RHEA-COMP:15719"/>
        <dbReference type="ChEBI" id="CHEBI:14649"/>
        <dbReference type="ChEBI" id="CHEBI:15377"/>
        <dbReference type="ChEBI" id="CHEBI:15378"/>
        <dbReference type="ChEBI" id="CHEBI:144029"/>
        <dbReference type="ChEBI" id="CHEBI:144051"/>
    </reaction>
    <physiologicalReaction direction="left-to-right" evidence="1">
        <dbReference type="Rhea" id="RHEA:60877"/>
    </physiologicalReaction>
</comment>
<comment type="catalytic activity">
    <reaction evidence="1">
        <text>NAD(+) + H2O = beta-nicotinamide D-ribonucleotide + AMP + 2 H(+)</text>
        <dbReference type="Rhea" id="RHEA:11800"/>
        <dbReference type="ChEBI" id="CHEBI:14649"/>
        <dbReference type="ChEBI" id="CHEBI:15377"/>
        <dbReference type="ChEBI" id="CHEBI:15378"/>
        <dbReference type="ChEBI" id="CHEBI:57540"/>
        <dbReference type="ChEBI" id="CHEBI:456215"/>
        <dbReference type="EC" id="3.6.1.22"/>
    </reaction>
</comment>
<comment type="catalytic activity">
    <reaction evidence="1">
        <text>NADH + H2O = reduced beta-nicotinamide D-ribonucleotide + AMP + 2 H(+)</text>
        <dbReference type="Rhea" id="RHEA:48868"/>
        <dbReference type="ChEBI" id="CHEBI:15377"/>
        <dbReference type="ChEBI" id="CHEBI:15378"/>
        <dbReference type="ChEBI" id="CHEBI:57945"/>
        <dbReference type="ChEBI" id="CHEBI:90832"/>
        <dbReference type="ChEBI" id="CHEBI:456215"/>
        <dbReference type="EC" id="3.6.1.22"/>
    </reaction>
</comment>
<comment type="cofactor">
    <cofactor evidence="1">
        <name>Mg(2+)</name>
        <dbReference type="ChEBI" id="CHEBI:18420"/>
    </cofactor>
    <cofactor evidence="1">
        <name>Mn(2+)</name>
        <dbReference type="ChEBI" id="CHEBI:29035"/>
    </cofactor>
    <text evidence="1">Divalent metal cations. Mg(2+) or Mn(2+).</text>
</comment>
<comment type="cofactor">
    <cofactor evidence="1">
        <name>Zn(2+)</name>
        <dbReference type="ChEBI" id="CHEBI:29105"/>
    </cofactor>
    <text evidence="1">Binds 1 zinc ion per subunit.</text>
</comment>
<comment type="subunit">
    <text evidence="1">Homodimer.</text>
</comment>
<comment type="similarity">
    <text evidence="1">Belongs to the Nudix hydrolase family. NudC subfamily.</text>
</comment>
<dbReference type="EC" id="3.6.1.-" evidence="1"/>
<dbReference type="EC" id="3.6.1.22" evidence="1"/>
<dbReference type="EMBL" id="AE016853">
    <property type="protein sequence ID" value="AAO56221.1"/>
    <property type="molecule type" value="Genomic_DNA"/>
</dbReference>
<dbReference type="RefSeq" id="NP_792526.1">
    <property type="nucleotide sequence ID" value="NC_004578.1"/>
</dbReference>
<dbReference type="RefSeq" id="WP_005762586.1">
    <property type="nucleotide sequence ID" value="NC_004578.1"/>
</dbReference>
<dbReference type="SMR" id="Q882A9"/>
<dbReference type="STRING" id="223283.PSPTO_2720"/>
<dbReference type="GeneID" id="1184374"/>
<dbReference type="KEGG" id="pst:PSPTO_2720"/>
<dbReference type="PATRIC" id="fig|223283.9.peg.2776"/>
<dbReference type="eggNOG" id="COG2816">
    <property type="taxonomic scope" value="Bacteria"/>
</dbReference>
<dbReference type="HOGENOM" id="CLU_037162_0_1_6"/>
<dbReference type="OrthoDB" id="9791656at2"/>
<dbReference type="PhylomeDB" id="Q882A9"/>
<dbReference type="Proteomes" id="UP000002515">
    <property type="component" value="Chromosome"/>
</dbReference>
<dbReference type="GO" id="GO:0005829">
    <property type="term" value="C:cytosol"/>
    <property type="evidence" value="ECO:0007669"/>
    <property type="project" value="TreeGrafter"/>
</dbReference>
<dbReference type="GO" id="GO:0000287">
    <property type="term" value="F:magnesium ion binding"/>
    <property type="evidence" value="ECO:0007669"/>
    <property type="project" value="UniProtKB-UniRule"/>
</dbReference>
<dbReference type="GO" id="GO:0030145">
    <property type="term" value="F:manganese ion binding"/>
    <property type="evidence" value="ECO:0007669"/>
    <property type="project" value="UniProtKB-UniRule"/>
</dbReference>
<dbReference type="GO" id="GO:0000210">
    <property type="term" value="F:NAD+ diphosphatase activity"/>
    <property type="evidence" value="ECO:0007669"/>
    <property type="project" value="UniProtKB-UniRule"/>
</dbReference>
<dbReference type="GO" id="GO:0035529">
    <property type="term" value="F:NADH pyrophosphatase activity"/>
    <property type="evidence" value="ECO:0007669"/>
    <property type="project" value="TreeGrafter"/>
</dbReference>
<dbReference type="GO" id="GO:0110153">
    <property type="term" value="F:RNA NAD-cap (NMN-forming) hydrolase activity"/>
    <property type="evidence" value="ECO:0007669"/>
    <property type="project" value="RHEA"/>
</dbReference>
<dbReference type="GO" id="GO:0008270">
    <property type="term" value="F:zinc ion binding"/>
    <property type="evidence" value="ECO:0007669"/>
    <property type="project" value="UniProtKB-UniRule"/>
</dbReference>
<dbReference type="GO" id="GO:0019677">
    <property type="term" value="P:NAD catabolic process"/>
    <property type="evidence" value="ECO:0007669"/>
    <property type="project" value="TreeGrafter"/>
</dbReference>
<dbReference type="GO" id="GO:0006734">
    <property type="term" value="P:NADH metabolic process"/>
    <property type="evidence" value="ECO:0007669"/>
    <property type="project" value="TreeGrafter"/>
</dbReference>
<dbReference type="GO" id="GO:0006742">
    <property type="term" value="P:NADP catabolic process"/>
    <property type="evidence" value="ECO:0007669"/>
    <property type="project" value="TreeGrafter"/>
</dbReference>
<dbReference type="CDD" id="cd03429">
    <property type="entry name" value="NUDIX_NADH_pyrophosphatase_Nudt13"/>
    <property type="match status" value="1"/>
</dbReference>
<dbReference type="Gene3D" id="3.90.79.20">
    <property type="match status" value="1"/>
</dbReference>
<dbReference type="Gene3D" id="3.90.79.10">
    <property type="entry name" value="Nucleoside Triphosphate Pyrophosphohydrolase"/>
    <property type="match status" value="1"/>
</dbReference>
<dbReference type="HAMAP" id="MF_00297">
    <property type="entry name" value="Nudix_NudC"/>
    <property type="match status" value="1"/>
</dbReference>
<dbReference type="InterPro" id="IPR050241">
    <property type="entry name" value="NAD-cap_RNA_hydrolase_NudC"/>
</dbReference>
<dbReference type="InterPro" id="IPR015375">
    <property type="entry name" value="NADH_PPase-like_N"/>
</dbReference>
<dbReference type="InterPro" id="IPR049734">
    <property type="entry name" value="NudC-like_C"/>
</dbReference>
<dbReference type="InterPro" id="IPR015797">
    <property type="entry name" value="NUDIX_hydrolase-like_dom_sf"/>
</dbReference>
<dbReference type="InterPro" id="IPR000086">
    <property type="entry name" value="NUDIX_hydrolase_dom"/>
</dbReference>
<dbReference type="InterPro" id="IPR022925">
    <property type="entry name" value="RNA_Hydrolase_NudC"/>
</dbReference>
<dbReference type="InterPro" id="IPR015376">
    <property type="entry name" value="Znr_NADH_PPase"/>
</dbReference>
<dbReference type="NCBIfam" id="NF001299">
    <property type="entry name" value="PRK00241.1"/>
    <property type="match status" value="1"/>
</dbReference>
<dbReference type="PANTHER" id="PTHR42904:SF6">
    <property type="entry name" value="NAD-CAPPED RNA HYDROLASE NUDT12"/>
    <property type="match status" value="1"/>
</dbReference>
<dbReference type="PANTHER" id="PTHR42904">
    <property type="entry name" value="NUDIX HYDROLASE, NUDC SUBFAMILY"/>
    <property type="match status" value="1"/>
</dbReference>
<dbReference type="Pfam" id="PF00293">
    <property type="entry name" value="NUDIX"/>
    <property type="match status" value="1"/>
</dbReference>
<dbReference type="Pfam" id="PF09296">
    <property type="entry name" value="NUDIX-like"/>
    <property type="match status" value="1"/>
</dbReference>
<dbReference type="Pfam" id="PF09297">
    <property type="entry name" value="Zn_ribbon_NUD"/>
    <property type="match status" value="1"/>
</dbReference>
<dbReference type="SUPFAM" id="SSF55811">
    <property type="entry name" value="Nudix"/>
    <property type="match status" value="2"/>
</dbReference>
<dbReference type="PROSITE" id="PS51462">
    <property type="entry name" value="NUDIX"/>
    <property type="match status" value="1"/>
</dbReference>
<reference key="1">
    <citation type="journal article" date="2003" name="Proc. Natl. Acad. Sci. U.S.A.">
        <title>The complete genome sequence of the Arabidopsis and tomato pathogen Pseudomonas syringae pv. tomato DC3000.</title>
        <authorList>
            <person name="Buell C.R."/>
            <person name="Joardar V."/>
            <person name="Lindeberg M."/>
            <person name="Selengut J."/>
            <person name="Paulsen I.T."/>
            <person name="Gwinn M.L."/>
            <person name="Dodson R.J."/>
            <person name="DeBoy R.T."/>
            <person name="Durkin A.S."/>
            <person name="Kolonay J.F."/>
            <person name="Madupu R."/>
            <person name="Daugherty S.C."/>
            <person name="Brinkac L.M."/>
            <person name="Beanan M.J."/>
            <person name="Haft D.H."/>
            <person name="Nelson W.C."/>
            <person name="Davidsen T.M."/>
            <person name="Zafar N."/>
            <person name="Zhou L."/>
            <person name="Liu J."/>
            <person name="Yuan Q."/>
            <person name="Khouri H.M."/>
            <person name="Fedorova N.B."/>
            <person name="Tran B."/>
            <person name="Russell D."/>
            <person name="Berry K.J."/>
            <person name="Utterback T.R."/>
            <person name="Van Aken S.E."/>
            <person name="Feldblyum T.V."/>
            <person name="D'Ascenzo M."/>
            <person name="Deng W.-L."/>
            <person name="Ramos A.R."/>
            <person name="Alfano J.R."/>
            <person name="Cartinhour S."/>
            <person name="Chatterjee A.K."/>
            <person name="Delaney T.P."/>
            <person name="Lazarowitz S.G."/>
            <person name="Martin G.B."/>
            <person name="Schneider D.J."/>
            <person name="Tang X."/>
            <person name="Bender C.L."/>
            <person name="White O."/>
            <person name="Fraser C.M."/>
            <person name="Collmer A."/>
        </authorList>
    </citation>
    <scope>NUCLEOTIDE SEQUENCE [LARGE SCALE GENOMIC DNA]</scope>
    <source>
        <strain>ATCC BAA-871 / DC3000</strain>
    </source>
</reference>
<organism>
    <name type="scientific">Pseudomonas syringae pv. tomato (strain ATCC BAA-871 / DC3000)</name>
    <dbReference type="NCBI Taxonomy" id="223283"/>
    <lineage>
        <taxon>Bacteria</taxon>
        <taxon>Pseudomonadati</taxon>
        <taxon>Pseudomonadota</taxon>
        <taxon>Gammaproteobacteria</taxon>
        <taxon>Pseudomonadales</taxon>
        <taxon>Pseudomonadaceae</taxon>
        <taxon>Pseudomonas</taxon>
    </lineage>
</organism>